<evidence type="ECO:0000250" key="1">
    <source>
        <dbReference type="UniProtKB" id="Q6ZRV2"/>
    </source>
</evidence>
<evidence type="ECO:0000256" key="2">
    <source>
        <dbReference type="SAM" id="MobiDB-lite"/>
    </source>
</evidence>
<evidence type="ECO:0000269" key="3">
    <source>
    </source>
</evidence>
<evidence type="ECO:0000305" key="4"/>
<evidence type="ECO:0000312" key="5">
    <source>
        <dbReference type="MGI" id="MGI:2145900"/>
    </source>
</evidence>
<evidence type="ECO:0007744" key="6">
    <source>
    </source>
</evidence>
<evidence type="ECO:0007744" key="7">
    <source>
    </source>
</evidence>
<evidence type="ECO:0007744" key="8">
    <source>
    </source>
</evidence>
<evidence type="ECO:0007744" key="9">
    <source>
    </source>
</evidence>
<name>FA83H_MOUSE</name>
<feature type="chain" id="PRO_0000324489" description="Protein FAM83H">
    <location>
        <begin position="1"/>
        <end position="1209"/>
    </location>
</feature>
<feature type="region of interest" description="DUF1669" evidence="1">
    <location>
        <begin position="1"/>
        <end position="286"/>
    </location>
</feature>
<feature type="region of interest" description="Mediates interaction with CSNK1A1 and is required for FAM83H activity in keratin cytoskeleton organization" evidence="1">
    <location>
        <begin position="1"/>
        <end position="286"/>
    </location>
</feature>
<feature type="region of interest" description="Disordered" evidence="2">
    <location>
        <begin position="512"/>
        <end position="545"/>
    </location>
</feature>
<feature type="region of interest" description="Disordered" evidence="2">
    <location>
        <begin position="615"/>
        <end position="664"/>
    </location>
</feature>
<feature type="region of interest" description="Disordered" evidence="2">
    <location>
        <begin position="735"/>
        <end position="760"/>
    </location>
</feature>
<feature type="region of interest" description="Disordered" evidence="2">
    <location>
        <begin position="829"/>
        <end position="1056"/>
    </location>
</feature>
<feature type="region of interest" description="Disordered" evidence="2">
    <location>
        <begin position="1076"/>
        <end position="1147"/>
    </location>
</feature>
<feature type="region of interest" description="Disordered" evidence="2">
    <location>
        <begin position="1174"/>
        <end position="1193"/>
    </location>
</feature>
<feature type="compositionally biased region" description="Polar residues" evidence="2">
    <location>
        <begin position="915"/>
        <end position="942"/>
    </location>
</feature>
<feature type="modified residue" description="Phosphoserine" evidence="1">
    <location>
        <position position="512"/>
    </location>
</feature>
<feature type="modified residue" description="Phosphoserine" evidence="1">
    <location>
        <position position="513"/>
    </location>
</feature>
<feature type="modified residue" description="Phosphoserine" evidence="1">
    <location>
        <position position="515"/>
    </location>
</feature>
<feature type="modified residue" description="Phosphoserine" evidence="8 9">
    <location>
        <position position="522"/>
    </location>
</feature>
<feature type="modified residue" description="Phosphoserine" evidence="1">
    <location>
        <position position="639"/>
    </location>
</feature>
<feature type="modified residue" description="Phosphoserine" evidence="1">
    <location>
        <position position="660"/>
    </location>
</feature>
<feature type="modified residue" description="Phosphothreonine" evidence="1">
    <location>
        <position position="749"/>
    </location>
</feature>
<feature type="modified residue" description="Phosphoserine" evidence="1">
    <location>
        <position position="752"/>
    </location>
</feature>
<feature type="modified residue" description="Phosphoserine" evidence="1">
    <location>
        <position position="778"/>
    </location>
</feature>
<feature type="modified residue" description="Phosphoserine" evidence="1">
    <location>
        <position position="806"/>
    </location>
</feature>
<feature type="modified residue" description="Phosphoserine" evidence="7">
    <location>
        <position position="871"/>
    </location>
</feature>
<feature type="modified residue" description="Phosphothreonine" evidence="1">
    <location>
        <position position="873"/>
    </location>
</feature>
<feature type="modified residue" description="Phosphoserine" evidence="7">
    <location>
        <position position="882"/>
    </location>
</feature>
<feature type="modified residue" description="Phosphoserine" evidence="7">
    <location>
        <position position="893"/>
    </location>
</feature>
<feature type="modified residue" description="Phosphoserine" evidence="8 9">
    <location>
        <position position="904"/>
    </location>
</feature>
<feature type="modified residue" description="Phosphoserine" evidence="8 9">
    <location>
        <position position="915"/>
    </location>
</feature>
<feature type="modified residue" description="Phosphothreonine" evidence="9">
    <location>
        <position position="917"/>
    </location>
</feature>
<feature type="modified residue" description="Phosphoserine" evidence="6 9">
    <location>
        <position position="926"/>
    </location>
</feature>
<feature type="modified residue" description="Phosphothreonine" evidence="9">
    <location>
        <position position="928"/>
    </location>
</feature>
<feature type="modified residue" description="Phosphoserine" evidence="1">
    <location>
        <position position="937"/>
    </location>
</feature>
<feature type="modified residue" description="Phosphoserine" evidence="8 9">
    <location>
        <position position="948"/>
    </location>
</feature>
<feature type="modified residue" description="Phosphoserine" evidence="8 9">
    <location>
        <position position="959"/>
    </location>
</feature>
<feature type="modified residue" description="Phosphoserine" evidence="8 9">
    <location>
        <position position="970"/>
    </location>
</feature>
<feature type="modified residue" description="Phosphoserine" evidence="1">
    <location>
        <position position="977"/>
    </location>
</feature>
<feature type="modified residue" description="Phosphoserine" evidence="1">
    <location>
        <position position="1035"/>
    </location>
</feature>
<feature type="modified residue" description="Phosphoserine" evidence="9">
    <location>
        <position position="1041"/>
    </location>
</feature>
<feature type="modified residue" description="Phosphoserine" evidence="1">
    <location>
        <position position="1057"/>
    </location>
</feature>
<feature type="modified residue" description="Phosphothreonine" evidence="1">
    <location>
        <position position="1072"/>
    </location>
</feature>
<feature type="modified residue" description="Phosphoserine" evidence="1">
    <location>
        <position position="1080"/>
    </location>
</feature>
<feature type="modified residue" description="Phosphoserine" evidence="1">
    <location>
        <position position="1098"/>
    </location>
</feature>
<feature type="modified residue" description="Phosphoserine" evidence="1">
    <location>
        <position position="1177"/>
    </location>
</feature>
<feature type="sequence conflict" description="In Ref. 1; BAC29093." evidence="4" ref="1">
    <original>T</original>
    <variation>A</variation>
    <location>
        <position position="873"/>
    </location>
</feature>
<accession>Q148V8</accession>
<accession>Q8BZF6</accession>
<accession>Q8CI79</accession>
<accession>Q8R5C2</accession>
<accession>Q8R5D0</accession>
<dbReference type="EMBL" id="AK035531">
    <property type="protein sequence ID" value="BAC29093.1"/>
    <property type="molecule type" value="mRNA"/>
</dbReference>
<dbReference type="EMBL" id="BC022937">
    <property type="protein sequence ID" value="AAH22937.1"/>
    <property type="molecule type" value="mRNA"/>
</dbReference>
<dbReference type="EMBL" id="BC023045">
    <property type="protein sequence ID" value="AAH23045.1"/>
    <property type="molecule type" value="mRNA"/>
</dbReference>
<dbReference type="EMBL" id="BC036149">
    <property type="protein sequence ID" value="AAH36149.1"/>
    <property type="status" value="ALT_INIT"/>
    <property type="molecule type" value="mRNA"/>
</dbReference>
<dbReference type="EMBL" id="BC117947">
    <property type="protein sequence ID" value="AAI17948.1"/>
    <property type="molecule type" value="mRNA"/>
</dbReference>
<dbReference type="EMBL" id="BC117948">
    <property type="protein sequence ID" value="AAI17949.1"/>
    <property type="molecule type" value="mRNA"/>
</dbReference>
<dbReference type="CCDS" id="CCDS27559.1"/>
<dbReference type="RefSeq" id="NP_001161725.1">
    <property type="nucleotide sequence ID" value="NM_001168253.1"/>
</dbReference>
<dbReference type="RefSeq" id="NP_598848.2">
    <property type="nucleotide sequence ID" value="NM_134087.2"/>
</dbReference>
<dbReference type="RefSeq" id="XP_006520299.2">
    <property type="nucleotide sequence ID" value="XM_006520236.3"/>
</dbReference>
<dbReference type="RefSeq" id="XP_006520300.1">
    <property type="nucleotide sequence ID" value="XM_006520237.5"/>
</dbReference>
<dbReference type="SMR" id="Q148V8"/>
<dbReference type="BioGRID" id="222906">
    <property type="interactions" value="5"/>
</dbReference>
<dbReference type="FunCoup" id="Q148V8">
    <property type="interactions" value="92"/>
</dbReference>
<dbReference type="IntAct" id="Q148V8">
    <property type="interactions" value="3"/>
</dbReference>
<dbReference type="MINT" id="Q148V8"/>
<dbReference type="STRING" id="10090.ENSMUSP00000126453"/>
<dbReference type="GlyGen" id="Q148V8">
    <property type="glycosylation" value="6 sites, 1 O-linked glycan (1 site)"/>
</dbReference>
<dbReference type="iPTMnet" id="Q148V8"/>
<dbReference type="PhosphoSitePlus" id="Q148V8"/>
<dbReference type="SwissPalm" id="Q148V8"/>
<dbReference type="jPOST" id="Q148V8"/>
<dbReference type="PaxDb" id="10090-ENSMUSP00000126453"/>
<dbReference type="PeptideAtlas" id="Q148V8"/>
<dbReference type="ProteomicsDB" id="275843"/>
<dbReference type="Pumba" id="Q148V8"/>
<dbReference type="Antibodypedia" id="14675">
    <property type="antibodies" value="40 antibodies from 12 providers"/>
</dbReference>
<dbReference type="Ensembl" id="ENSMUST00000060807.12">
    <property type="protein sequence ID" value="ENSMUSP00000059839.6"/>
    <property type="gene ID" value="ENSMUSG00000046761.14"/>
</dbReference>
<dbReference type="Ensembl" id="ENSMUST00000170153.2">
    <property type="protein sequence ID" value="ENSMUSP00000126453.2"/>
    <property type="gene ID" value="ENSMUSG00000046761.14"/>
</dbReference>
<dbReference type="GeneID" id="105732"/>
<dbReference type="KEGG" id="mmu:105732"/>
<dbReference type="UCSC" id="uc007wic.2">
    <property type="organism name" value="mouse"/>
</dbReference>
<dbReference type="AGR" id="MGI:2145900"/>
<dbReference type="CTD" id="286077"/>
<dbReference type="MGI" id="MGI:2145900">
    <property type="gene designation" value="Fam83h"/>
</dbReference>
<dbReference type="VEuPathDB" id="HostDB:ENSMUSG00000046761"/>
<dbReference type="eggNOG" id="ENOG502QW7K">
    <property type="taxonomic scope" value="Eukaryota"/>
</dbReference>
<dbReference type="GeneTree" id="ENSGT00940000159342"/>
<dbReference type="HOGENOM" id="CLU_009734_0_0_1"/>
<dbReference type="InParanoid" id="Q148V8"/>
<dbReference type="PhylomeDB" id="Q148V8"/>
<dbReference type="TreeFam" id="TF330777"/>
<dbReference type="BioGRID-ORCS" id="105732">
    <property type="hits" value="3 hits in 81 CRISPR screens"/>
</dbReference>
<dbReference type="ChiTaRS" id="Fam83h">
    <property type="organism name" value="mouse"/>
</dbReference>
<dbReference type="PRO" id="PR:Q148V8"/>
<dbReference type="Proteomes" id="UP000000589">
    <property type="component" value="Chromosome 15"/>
</dbReference>
<dbReference type="RNAct" id="Q148V8">
    <property type="molecule type" value="protein"/>
</dbReference>
<dbReference type="Bgee" id="ENSMUSG00000046761">
    <property type="expression patterns" value="Expressed in lip and 103 other cell types or tissues"/>
</dbReference>
<dbReference type="ExpressionAtlas" id="Q148V8">
    <property type="expression patterns" value="baseline and differential"/>
</dbReference>
<dbReference type="GO" id="GO:0005737">
    <property type="term" value="C:cytoplasm"/>
    <property type="evidence" value="ECO:0007669"/>
    <property type="project" value="UniProtKB-KW"/>
</dbReference>
<dbReference type="GO" id="GO:0005856">
    <property type="term" value="C:cytoskeleton"/>
    <property type="evidence" value="ECO:0007669"/>
    <property type="project" value="UniProtKB-SubCell"/>
</dbReference>
<dbReference type="GO" id="GO:1990254">
    <property type="term" value="F:keratin filament binding"/>
    <property type="evidence" value="ECO:0000250"/>
    <property type="project" value="UniProtKB"/>
</dbReference>
<dbReference type="GO" id="GO:0031214">
    <property type="term" value="P:biomineral tissue development"/>
    <property type="evidence" value="ECO:0007669"/>
    <property type="project" value="UniProtKB-KW"/>
</dbReference>
<dbReference type="GO" id="GO:0045104">
    <property type="term" value="P:intermediate filament cytoskeleton organization"/>
    <property type="evidence" value="ECO:0000250"/>
    <property type="project" value="UniProtKB"/>
</dbReference>
<dbReference type="GO" id="GO:0030335">
    <property type="term" value="P:positive regulation of cell migration"/>
    <property type="evidence" value="ECO:0000250"/>
    <property type="project" value="UniProtKB"/>
</dbReference>
<dbReference type="GO" id="GO:0044380">
    <property type="term" value="P:protein localization to cytoskeleton"/>
    <property type="evidence" value="ECO:0000250"/>
    <property type="project" value="UniProtKB"/>
</dbReference>
<dbReference type="CDD" id="cd09188">
    <property type="entry name" value="PLDc_FAM83H_N"/>
    <property type="match status" value="1"/>
</dbReference>
<dbReference type="FunFam" id="3.30.870.10:FF:000004">
    <property type="entry name" value="protein FAM83H isoform X2"/>
    <property type="match status" value="1"/>
</dbReference>
<dbReference type="Gene3D" id="3.30.870.10">
    <property type="entry name" value="Endonuclease Chain A"/>
    <property type="match status" value="1"/>
</dbReference>
<dbReference type="InterPro" id="IPR050944">
    <property type="entry name" value="FAM83"/>
</dbReference>
<dbReference type="InterPro" id="IPR041996">
    <property type="entry name" value="PLDc_FAM83H_N"/>
</dbReference>
<dbReference type="InterPro" id="IPR012461">
    <property type="entry name" value="SACK1"/>
</dbReference>
<dbReference type="PANTHER" id="PTHR16181">
    <property type="entry name" value="PROTEIN FAM83A-RELATED"/>
    <property type="match status" value="1"/>
</dbReference>
<dbReference type="PANTHER" id="PTHR16181:SF29">
    <property type="entry name" value="PROTEIN FAM83A-RELATED"/>
    <property type="match status" value="1"/>
</dbReference>
<dbReference type="Pfam" id="PF07894">
    <property type="entry name" value="SACK1"/>
    <property type="match status" value="1"/>
</dbReference>
<dbReference type="SUPFAM" id="SSF56024">
    <property type="entry name" value="Phospholipase D/nuclease"/>
    <property type="match status" value="1"/>
</dbReference>
<sequence>MARRSQSSSQGDNPLAPGYLPPHYKEYYRLAVDALTEGGPEAYNRFLASEGAPDFLCPEELEHVSRHLQPPQYVAREPPEGTPSDVDMDGSSGTYWPVNSDQAVPELDLGWPLTFGFQGTEVTTLVQPPPPDSPSIKDEARRMIRSAQQVVAVVMDMFTDVDLLSEVLEAAARRVPVYILLDEMNAQHFLDMADKCRVNLHHVDFLRVRTVAGPTYYCRTGKSFKGHLKEKFLLVDCAVVMSGSYSFMWSFEKIHRSLAHVFQGELVSSFDEEFRILFAQSEPLVPSAGALARMDAYALAPYSGAGPLVGVPGVGAPTPFSFPKRAHLLFPPPREEGLGFPSFLDPDRHFLSAFRREELQRMPGGALEPHTGLRPLARPTEAGPFGELAGPRGFFQSRHLEMDAFKRHSYATPDGAGAVENFAAARQVSRQTFLSHGDDFRFQTSHFQRDQLYQQHYQWDPQFAPARPQGLFEKLRAGRPGFADPDDFALGAGHRFPELGADVHQRLEYVPSSASREVRHGSDPAFGPSPRGLEPSGASRPNLGQRFPCQATLRQGLDTASEAEPERRGGPEGRAGLRHWRLASYLSGCHGDGGEEGLPMEAEACEDEVLAPGGRDLLPSAFRTPAAFPAKGPKPGSGSGGGDSSEREGPEETSLAKQDSFRSRLNPLIQRSSRLRSSLIFASQAEGAVGTAAATTEKVQLMHKEQTVSETLGPSGEAVRSSASAKVAELLEKYKGPARDPGGAGGAVTSSSHSKAVVSQAWREEVVAPGGAGTERRSLESCLLDLRDSFAQQLHQEAERHPGAASLTAAQLLDTLGGTDRLPSRFLSAQGRSLSPQGRDSPPPEGLGTHQLPYSEPKGNPTPAYPERKGSPTPAYPERKGSPTPAYPERKGSPTPAYPERKGSPTQAYPERKGSPTSGFPNRRGSPTTGLMEQKGSPTSTYPDRRGSPVPPVPERRGSPVPPVPERRGSLTFAGESSKTGPTEEVSSGPMEVLRKGSLRLRQLLSPKNERRGEDEGSFPTPQENGQPESPRRPSLSRGDSTEAAAEERGSRVRLASATANALYSSNLRDDTKAILEQISAHGQKHRGVPAPGPAHSSPDVGRPTTAGDLAPDMSDKDKCSAIFRSDSLGTQGRLSRTLPGSAEERDRLLRRMESMRKEKRVYSRFEVFCKKDEAGSSGAGDNLADEDTRDSKMGKFVPKILGTFKSKK</sequence>
<gene>
    <name evidence="5" type="primary">Fam83h</name>
</gene>
<organism>
    <name type="scientific">Mus musculus</name>
    <name type="common">Mouse</name>
    <dbReference type="NCBI Taxonomy" id="10090"/>
    <lineage>
        <taxon>Eukaryota</taxon>
        <taxon>Metazoa</taxon>
        <taxon>Chordata</taxon>
        <taxon>Craniata</taxon>
        <taxon>Vertebrata</taxon>
        <taxon>Euteleostomi</taxon>
        <taxon>Mammalia</taxon>
        <taxon>Eutheria</taxon>
        <taxon>Euarchontoglires</taxon>
        <taxon>Glires</taxon>
        <taxon>Rodentia</taxon>
        <taxon>Myomorpha</taxon>
        <taxon>Muroidea</taxon>
        <taxon>Muridae</taxon>
        <taxon>Murinae</taxon>
        <taxon>Mus</taxon>
        <taxon>Mus</taxon>
    </lineage>
</organism>
<proteinExistence type="evidence at protein level"/>
<protein>
    <recommendedName>
        <fullName evidence="4">Protein FAM83H</fullName>
    </recommendedName>
</protein>
<reference key="1">
    <citation type="journal article" date="2005" name="Science">
        <title>The transcriptional landscape of the mammalian genome.</title>
        <authorList>
            <person name="Carninci P."/>
            <person name="Kasukawa T."/>
            <person name="Katayama S."/>
            <person name="Gough J."/>
            <person name="Frith M.C."/>
            <person name="Maeda N."/>
            <person name="Oyama R."/>
            <person name="Ravasi T."/>
            <person name="Lenhard B."/>
            <person name="Wells C."/>
            <person name="Kodzius R."/>
            <person name="Shimokawa K."/>
            <person name="Bajic V.B."/>
            <person name="Brenner S.E."/>
            <person name="Batalov S."/>
            <person name="Forrest A.R."/>
            <person name="Zavolan M."/>
            <person name="Davis M.J."/>
            <person name="Wilming L.G."/>
            <person name="Aidinis V."/>
            <person name="Allen J.E."/>
            <person name="Ambesi-Impiombato A."/>
            <person name="Apweiler R."/>
            <person name="Aturaliya R.N."/>
            <person name="Bailey T.L."/>
            <person name="Bansal M."/>
            <person name="Baxter L."/>
            <person name="Beisel K.W."/>
            <person name="Bersano T."/>
            <person name="Bono H."/>
            <person name="Chalk A.M."/>
            <person name="Chiu K.P."/>
            <person name="Choudhary V."/>
            <person name="Christoffels A."/>
            <person name="Clutterbuck D.R."/>
            <person name="Crowe M.L."/>
            <person name="Dalla E."/>
            <person name="Dalrymple B.P."/>
            <person name="de Bono B."/>
            <person name="Della Gatta G."/>
            <person name="di Bernardo D."/>
            <person name="Down T."/>
            <person name="Engstrom P."/>
            <person name="Fagiolini M."/>
            <person name="Faulkner G."/>
            <person name="Fletcher C.F."/>
            <person name="Fukushima T."/>
            <person name="Furuno M."/>
            <person name="Futaki S."/>
            <person name="Gariboldi M."/>
            <person name="Georgii-Hemming P."/>
            <person name="Gingeras T.R."/>
            <person name="Gojobori T."/>
            <person name="Green R.E."/>
            <person name="Gustincich S."/>
            <person name="Harbers M."/>
            <person name="Hayashi Y."/>
            <person name="Hensch T.K."/>
            <person name="Hirokawa N."/>
            <person name="Hill D."/>
            <person name="Huminiecki L."/>
            <person name="Iacono M."/>
            <person name="Ikeo K."/>
            <person name="Iwama A."/>
            <person name="Ishikawa T."/>
            <person name="Jakt M."/>
            <person name="Kanapin A."/>
            <person name="Katoh M."/>
            <person name="Kawasawa Y."/>
            <person name="Kelso J."/>
            <person name="Kitamura H."/>
            <person name="Kitano H."/>
            <person name="Kollias G."/>
            <person name="Krishnan S.P."/>
            <person name="Kruger A."/>
            <person name="Kummerfeld S.K."/>
            <person name="Kurochkin I.V."/>
            <person name="Lareau L.F."/>
            <person name="Lazarevic D."/>
            <person name="Lipovich L."/>
            <person name="Liu J."/>
            <person name="Liuni S."/>
            <person name="McWilliam S."/>
            <person name="Madan Babu M."/>
            <person name="Madera M."/>
            <person name="Marchionni L."/>
            <person name="Matsuda H."/>
            <person name="Matsuzawa S."/>
            <person name="Miki H."/>
            <person name="Mignone F."/>
            <person name="Miyake S."/>
            <person name="Morris K."/>
            <person name="Mottagui-Tabar S."/>
            <person name="Mulder N."/>
            <person name="Nakano N."/>
            <person name="Nakauchi H."/>
            <person name="Ng P."/>
            <person name="Nilsson R."/>
            <person name="Nishiguchi S."/>
            <person name="Nishikawa S."/>
            <person name="Nori F."/>
            <person name="Ohara O."/>
            <person name="Okazaki Y."/>
            <person name="Orlando V."/>
            <person name="Pang K.C."/>
            <person name="Pavan W.J."/>
            <person name="Pavesi G."/>
            <person name="Pesole G."/>
            <person name="Petrovsky N."/>
            <person name="Piazza S."/>
            <person name="Reed J."/>
            <person name="Reid J.F."/>
            <person name="Ring B.Z."/>
            <person name="Ringwald M."/>
            <person name="Rost B."/>
            <person name="Ruan Y."/>
            <person name="Salzberg S.L."/>
            <person name="Sandelin A."/>
            <person name="Schneider C."/>
            <person name="Schoenbach C."/>
            <person name="Sekiguchi K."/>
            <person name="Semple C.A."/>
            <person name="Seno S."/>
            <person name="Sessa L."/>
            <person name="Sheng Y."/>
            <person name="Shibata Y."/>
            <person name="Shimada H."/>
            <person name="Shimada K."/>
            <person name="Silva D."/>
            <person name="Sinclair B."/>
            <person name="Sperling S."/>
            <person name="Stupka E."/>
            <person name="Sugiura K."/>
            <person name="Sultana R."/>
            <person name="Takenaka Y."/>
            <person name="Taki K."/>
            <person name="Tammoja K."/>
            <person name="Tan S.L."/>
            <person name="Tang S."/>
            <person name="Taylor M.S."/>
            <person name="Tegner J."/>
            <person name="Teichmann S.A."/>
            <person name="Ueda H.R."/>
            <person name="van Nimwegen E."/>
            <person name="Verardo R."/>
            <person name="Wei C.L."/>
            <person name="Yagi K."/>
            <person name="Yamanishi H."/>
            <person name="Zabarovsky E."/>
            <person name="Zhu S."/>
            <person name="Zimmer A."/>
            <person name="Hide W."/>
            <person name="Bult C."/>
            <person name="Grimmond S.M."/>
            <person name="Teasdale R.D."/>
            <person name="Liu E.T."/>
            <person name="Brusic V."/>
            <person name="Quackenbush J."/>
            <person name="Wahlestedt C."/>
            <person name="Mattick J.S."/>
            <person name="Hume D.A."/>
            <person name="Kai C."/>
            <person name="Sasaki D."/>
            <person name="Tomaru Y."/>
            <person name="Fukuda S."/>
            <person name="Kanamori-Katayama M."/>
            <person name="Suzuki M."/>
            <person name="Aoki J."/>
            <person name="Arakawa T."/>
            <person name="Iida J."/>
            <person name="Imamura K."/>
            <person name="Itoh M."/>
            <person name="Kato T."/>
            <person name="Kawaji H."/>
            <person name="Kawagashira N."/>
            <person name="Kawashima T."/>
            <person name="Kojima M."/>
            <person name="Kondo S."/>
            <person name="Konno H."/>
            <person name="Nakano K."/>
            <person name="Ninomiya N."/>
            <person name="Nishio T."/>
            <person name="Okada M."/>
            <person name="Plessy C."/>
            <person name="Shibata K."/>
            <person name="Shiraki T."/>
            <person name="Suzuki S."/>
            <person name="Tagami M."/>
            <person name="Waki K."/>
            <person name="Watahiki A."/>
            <person name="Okamura-Oho Y."/>
            <person name="Suzuki H."/>
            <person name="Kawai J."/>
            <person name="Hayashizaki Y."/>
        </authorList>
    </citation>
    <scope>NUCLEOTIDE SEQUENCE [LARGE SCALE MRNA]</scope>
    <source>
        <strain>C57BL/6J</strain>
        <tissue>Urinary bladder</tissue>
    </source>
</reference>
<reference key="2">
    <citation type="journal article" date="2004" name="Genome Res.">
        <title>The status, quality, and expansion of the NIH full-length cDNA project: the Mammalian Gene Collection (MGC).</title>
        <authorList>
            <consortium name="The MGC Project Team"/>
        </authorList>
    </citation>
    <scope>NUCLEOTIDE SEQUENCE [LARGE SCALE MRNA]</scope>
    <source>
        <strain>Czech II</strain>
        <strain>FVB/N</strain>
        <tissue>Mammary tumor</tissue>
    </source>
</reference>
<reference key="3">
    <citation type="journal article" date="2007" name="Proc. Natl. Acad. Sci. U.S.A.">
        <title>Large-scale phosphorylation analysis of mouse liver.</title>
        <authorList>
            <person name="Villen J."/>
            <person name="Beausoleil S.A."/>
            <person name="Gerber S.A."/>
            <person name="Gygi S.P."/>
        </authorList>
    </citation>
    <scope>PHOSPHORYLATION [LARGE SCALE ANALYSIS] AT SER-926</scope>
    <scope>IDENTIFICATION BY MASS SPECTROMETRY [LARGE SCALE ANALYSIS]</scope>
    <source>
        <tissue>Liver</tissue>
    </source>
</reference>
<reference key="4">
    <citation type="journal article" date="2008" name="Am. J. Hum. Genet.">
        <title>FAM83H mutations in families with autosomal-dominant hypocalcified amelogenesis imperfecta.</title>
        <authorList>
            <person name="Kim J.-W."/>
            <person name="Lee S.-K."/>
            <person name="Lee Z.H."/>
            <person name="Park J.-C."/>
            <person name="Lee K.-E."/>
            <person name="Lee M.-H."/>
            <person name="Park J.-T."/>
            <person name="Seo B.-M."/>
            <person name="Hu J.C.-C."/>
            <person name="Simmer J.P."/>
        </authorList>
    </citation>
    <scope>TISSUE SPECIFICITY</scope>
</reference>
<reference key="5">
    <citation type="journal article" date="2008" name="J. Proteome Res.">
        <title>Specific phosphopeptide enrichment with immobilized titanium ion affinity chromatography adsorbent for phosphoproteome analysis.</title>
        <authorList>
            <person name="Zhou H."/>
            <person name="Ye M."/>
            <person name="Dong J."/>
            <person name="Han G."/>
            <person name="Jiang X."/>
            <person name="Wu R."/>
            <person name="Zou H."/>
        </authorList>
    </citation>
    <scope>PHOSPHORYLATION [LARGE SCALE ANALYSIS] AT SER-871; SER-882 AND SER-893</scope>
    <scope>IDENTIFICATION BY MASS SPECTROMETRY [LARGE SCALE ANALYSIS]</scope>
    <source>
        <tissue>Liver</tissue>
    </source>
</reference>
<reference key="6">
    <citation type="journal article" date="2009" name="Immunity">
        <title>The phagosomal proteome in interferon-gamma-activated macrophages.</title>
        <authorList>
            <person name="Trost M."/>
            <person name="English L."/>
            <person name="Lemieux S."/>
            <person name="Courcelles M."/>
            <person name="Desjardins M."/>
            <person name="Thibault P."/>
        </authorList>
    </citation>
    <scope>PHOSPHORYLATION [LARGE SCALE ANALYSIS] AT SER-522; SER-904; SER-915; SER-948; SER-959 AND SER-970</scope>
    <scope>IDENTIFICATION BY MASS SPECTROMETRY [LARGE SCALE ANALYSIS]</scope>
</reference>
<reference key="7">
    <citation type="journal article" date="2010" name="Cell">
        <title>A tissue-specific atlas of mouse protein phosphorylation and expression.</title>
        <authorList>
            <person name="Huttlin E.L."/>
            <person name="Jedrychowski M.P."/>
            <person name="Elias J.E."/>
            <person name="Goswami T."/>
            <person name="Rad R."/>
            <person name="Beausoleil S.A."/>
            <person name="Villen J."/>
            <person name="Haas W."/>
            <person name="Sowa M.E."/>
            <person name="Gygi S.P."/>
        </authorList>
    </citation>
    <scope>PHOSPHORYLATION [LARGE SCALE ANALYSIS] AT SER-522; SER-904; SER-915; THR-917; SER-926; THR-928; SER-948; SER-959; SER-970 AND SER-1041</scope>
    <scope>IDENTIFICATION BY MASS SPECTROMETRY [LARGE SCALE ANALYSIS]</scope>
    <source>
        <tissue>Brown adipose tissue</tissue>
        <tissue>Kidney</tissue>
        <tissue>Liver</tissue>
        <tissue>Lung</tissue>
        <tissue>Pancreas</tissue>
        <tissue>Testis</tissue>
    </source>
</reference>
<keyword id="KW-0091">Biomineralization</keyword>
<keyword id="KW-0963">Cytoplasm</keyword>
<keyword id="KW-0206">Cytoskeleton</keyword>
<keyword id="KW-0597">Phosphoprotein</keyword>
<keyword id="KW-1185">Reference proteome</keyword>
<comment type="function">
    <text evidence="1">May play a major role in the structural organization and calcification of developing enamel. May play a role in keratin cytoskeleton disassembly by recruiting CSNK1A1 to keratin filaments. Thereby, it may regulate epithelial cell migration.</text>
</comment>
<comment type="subunit">
    <text evidence="1">Directly interacts (via DUF1669) with casein kinase isoforms CSNK1A1, CSNK1A1L, CSNK1D and CSNK1E. Interaction with CSNK1A1 recruits CSNK1A1 to keratin filaments (By similarity). Interacts with KRT18 and probably other keratins.</text>
</comment>
<comment type="subcellular location">
    <subcellularLocation>
        <location evidence="1">Cytoplasm</location>
        <location evidence="1">Cytoskeleton</location>
    </subcellularLocation>
    <subcellularLocation>
        <location evidence="1">Cytoplasm</location>
    </subcellularLocation>
    <text evidence="1">Colocalizes with keratin filaments.</text>
</comment>
<comment type="tissue specificity">
    <text evidence="3">Expressed in tooth follicle, eye, liver and kidney.</text>
</comment>
<comment type="domain">
    <text evidence="1">All members of the FAM83 family of proteins share a conserved N-terminal DUF1669 (domain of unknown function 1669) domain of about 300 amino acids. This domain mediates the interaction with casein kinase 1 (CK1) isoforms. Therefore, it has been proposed to rename DUF1669 the polypeptide anchor of CK1 domain.</text>
</comment>
<comment type="similarity">
    <text evidence="4">Belongs to the FAM83 family.</text>
</comment>
<comment type="sequence caution" evidence="4">
    <conflict type="erroneous initiation">
        <sequence resource="EMBL-CDS" id="AAH36149"/>
    </conflict>
    <text>Extended N-terminus.</text>
</comment>